<name>VKTH3_BUNMU</name>
<comment type="function">
    <text evidence="1">Beta-bungarotoxins are presynaptic neurotoxins of the venom. The B chain is homologous to venom basic protease inhibitors but has no protease inhibitor activity and blocks voltage-gated potassium channels (Kv) (By similarity).</text>
</comment>
<comment type="subunit">
    <text>Heterodimer; disulfide-linked. The A chains have phospholipase A2 activity and the B chains show homology with the basic protease inhibitors.</text>
</comment>
<comment type="subcellular location">
    <subcellularLocation>
        <location evidence="1">Secreted</location>
    </subcellularLocation>
</comment>
<comment type="tissue specificity">
    <text>Expressed by the venom gland.</text>
</comment>
<comment type="similarity">
    <text evidence="3">Belongs to the venom Kunitz-type family.</text>
</comment>
<keyword id="KW-1015">Disulfide bond</keyword>
<keyword id="KW-0872">Ion channel impairing toxin</keyword>
<keyword id="KW-0528">Neurotoxin</keyword>
<keyword id="KW-0632">Potassium channel impairing toxin</keyword>
<keyword id="KW-0638">Presynaptic neurotoxin</keyword>
<keyword id="KW-0964">Secreted</keyword>
<keyword id="KW-0732">Signal</keyword>
<keyword id="KW-0800">Toxin</keyword>
<keyword id="KW-1220">Voltage-gated potassium channel impairing toxin</keyword>
<organism>
    <name type="scientific">Bungarus multicinctus</name>
    <name type="common">Many-banded krait</name>
    <dbReference type="NCBI Taxonomy" id="8616"/>
    <lineage>
        <taxon>Eukaryota</taxon>
        <taxon>Metazoa</taxon>
        <taxon>Chordata</taxon>
        <taxon>Craniata</taxon>
        <taxon>Vertebrata</taxon>
        <taxon>Euteleostomi</taxon>
        <taxon>Lepidosauria</taxon>
        <taxon>Squamata</taxon>
        <taxon>Bifurcata</taxon>
        <taxon>Unidentata</taxon>
        <taxon>Episquamata</taxon>
        <taxon>Toxicofera</taxon>
        <taxon>Serpentes</taxon>
        <taxon>Colubroidea</taxon>
        <taxon>Elapidae</taxon>
        <taxon>Bungarinae</taxon>
        <taxon>Bungarus</taxon>
    </lineage>
</organism>
<evidence type="ECO:0000250" key="1"/>
<evidence type="ECO:0000255" key="2">
    <source>
        <dbReference type="PROSITE-ProRule" id="PRU00031"/>
    </source>
</evidence>
<evidence type="ECO:0000305" key="3"/>
<dbReference type="EMBL" id="AJ242991">
    <property type="protein sequence ID" value="CAB44700.1"/>
    <property type="molecule type" value="mRNA"/>
</dbReference>
<dbReference type="SMR" id="Q9W728"/>
<dbReference type="GO" id="GO:0005615">
    <property type="term" value="C:extracellular space"/>
    <property type="evidence" value="ECO:0007669"/>
    <property type="project" value="TreeGrafter"/>
</dbReference>
<dbReference type="GO" id="GO:0015459">
    <property type="term" value="F:potassium channel regulator activity"/>
    <property type="evidence" value="ECO:0007669"/>
    <property type="project" value="UniProtKB-KW"/>
</dbReference>
<dbReference type="GO" id="GO:0004867">
    <property type="term" value="F:serine-type endopeptidase inhibitor activity"/>
    <property type="evidence" value="ECO:0007669"/>
    <property type="project" value="InterPro"/>
</dbReference>
<dbReference type="GO" id="GO:0090729">
    <property type="term" value="F:toxin activity"/>
    <property type="evidence" value="ECO:0007669"/>
    <property type="project" value="UniProtKB-KW"/>
</dbReference>
<dbReference type="CDD" id="cd22619">
    <property type="entry name" value="Kunitz_B2B"/>
    <property type="match status" value="1"/>
</dbReference>
<dbReference type="Gene3D" id="4.10.410.10">
    <property type="entry name" value="Pancreatic trypsin inhibitor Kunitz domain"/>
    <property type="match status" value="1"/>
</dbReference>
<dbReference type="InterPro" id="IPR002223">
    <property type="entry name" value="Kunitz_BPTI"/>
</dbReference>
<dbReference type="InterPro" id="IPR036880">
    <property type="entry name" value="Kunitz_BPTI_sf"/>
</dbReference>
<dbReference type="InterPro" id="IPR020901">
    <property type="entry name" value="Prtase_inh_Kunz-CS"/>
</dbReference>
<dbReference type="InterPro" id="IPR051388">
    <property type="entry name" value="Serpin_venom_toxin"/>
</dbReference>
<dbReference type="PANTHER" id="PTHR46751">
    <property type="entry name" value="EPPIN"/>
    <property type="match status" value="1"/>
</dbReference>
<dbReference type="PANTHER" id="PTHR46751:SF1">
    <property type="entry name" value="WAP FOUR-DISULFIDE CORE DOMAIN PROTEIN 6A"/>
    <property type="match status" value="1"/>
</dbReference>
<dbReference type="Pfam" id="PF00014">
    <property type="entry name" value="Kunitz_BPTI"/>
    <property type="match status" value="1"/>
</dbReference>
<dbReference type="PRINTS" id="PR00759">
    <property type="entry name" value="BASICPTASE"/>
</dbReference>
<dbReference type="SMART" id="SM00131">
    <property type="entry name" value="KU"/>
    <property type="match status" value="1"/>
</dbReference>
<dbReference type="SUPFAM" id="SSF57362">
    <property type="entry name" value="BPTI-like"/>
    <property type="match status" value="1"/>
</dbReference>
<dbReference type="PROSITE" id="PS00280">
    <property type="entry name" value="BPTI_KUNITZ_1"/>
    <property type="match status" value="1"/>
</dbReference>
<dbReference type="PROSITE" id="PS50279">
    <property type="entry name" value="BPTI_KUNITZ_2"/>
    <property type="match status" value="1"/>
</dbReference>
<feature type="signal peptide" evidence="1">
    <location>
        <begin position="1"/>
        <end position="24"/>
    </location>
</feature>
<feature type="chain" id="PRO_5000065301" description="Kunitz-type serine protease inhibitor homolog beta-bungarotoxin B3 chain">
    <location>
        <begin position="25"/>
        <end position="85"/>
    </location>
</feature>
<feature type="domain" description="BPTI/Kunitz inhibitor" evidence="2">
    <location>
        <begin position="31"/>
        <end position="81"/>
    </location>
</feature>
<feature type="disulfide bond" evidence="2">
    <location>
        <begin position="31"/>
        <end position="81"/>
    </location>
</feature>
<feature type="disulfide bond" evidence="2">
    <location>
        <begin position="40"/>
        <end position="64"/>
    </location>
</feature>
<feature type="disulfide bond" evidence="2">
    <location>
        <begin position="56"/>
        <end position="77"/>
    </location>
</feature>
<feature type="disulfide bond" description="Interchain (with an A chain)" evidence="2">
    <location>
        <position position="79"/>
    </location>
</feature>
<protein>
    <recommendedName>
        <fullName>Kunitz-type serine protease inhibitor homolog beta-bungarotoxin B3 chain</fullName>
    </recommendedName>
</protein>
<proteinExistence type="evidence at transcript level"/>
<accession>Q9W728</accession>
<sequence length="85" mass="9599">MSSGGLLLLLGLLTLCAELIPVSSRQRHRDCDKPPDKGNCGPVRRAFYYDTRLKTCKAFQYRGCNGNGNHFKSDHLCRCECLEYS</sequence>
<reference key="1">
    <citation type="journal article" date="2006" name="Toxicon">
        <title>Divergence of genes encoding B chains of beta-bungarotoxins.</title>
        <authorList>
            <person name="Cheng Y.-C."/>
            <person name="Chen K.-C."/>
            <person name="Lin S.-K."/>
            <person name="Chang L.-S."/>
        </authorList>
    </citation>
    <scope>NUCLEOTIDE SEQUENCE [MRNA]</scope>
    <source>
        <tissue>Venom gland</tissue>
    </source>
</reference>